<gene>
    <name evidence="1" type="primary">arnF</name>
    <name type="ordered locus">EcE24377A_2555</name>
</gene>
<sequence length="128" mass="14067">MGLIWGLFSVIIASVAQLSLGFAASHLPPMTHLWDFIAALLAFGLDARILLLGLLGYLLSVFCWYKTLHKLALSKAYALLSMSYVLVWIASMVLPGWEGTFSLKALLGVACIMSGLMLIFLPTTKQRY</sequence>
<proteinExistence type="inferred from homology"/>
<accession>A7ZP77</accession>
<comment type="function">
    <text evidence="1">Translocates 4-amino-4-deoxy-L-arabinose-phosphoundecaprenol (alpha-L-Ara4N-phosphoundecaprenol) from the cytoplasmic to the periplasmic side of the inner membrane.</text>
</comment>
<comment type="pathway">
    <text evidence="1">Bacterial outer membrane biogenesis; lipopolysaccharide biosynthesis.</text>
</comment>
<comment type="subunit">
    <text evidence="1">Heterodimer of ArnE and ArnF.</text>
</comment>
<comment type="subcellular location">
    <subcellularLocation>
        <location evidence="1">Cell inner membrane</location>
        <topology evidence="1">Multi-pass membrane protein</topology>
    </subcellularLocation>
</comment>
<comment type="similarity">
    <text evidence="1">Belongs to the ArnF family.</text>
</comment>
<protein>
    <recommendedName>
        <fullName evidence="1">Probable 4-amino-4-deoxy-L-arabinose-phosphoundecaprenol flippase subunit ArnF</fullName>
        <shortName evidence="1">L-Ara4N-phosphoundecaprenol flippase subunit ArnF</shortName>
    </recommendedName>
    <alternativeName>
        <fullName evidence="1">Undecaprenyl phosphate-aminoarabinose flippase subunit ArnF</fullName>
    </alternativeName>
</protein>
<name>ARNF_ECO24</name>
<keyword id="KW-0997">Cell inner membrane</keyword>
<keyword id="KW-1003">Cell membrane</keyword>
<keyword id="KW-0441">Lipid A biosynthesis</keyword>
<keyword id="KW-0444">Lipid biosynthesis</keyword>
<keyword id="KW-0443">Lipid metabolism</keyword>
<keyword id="KW-0448">Lipopolysaccharide biosynthesis</keyword>
<keyword id="KW-0472">Membrane</keyword>
<keyword id="KW-1185">Reference proteome</keyword>
<keyword id="KW-0812">Transmembrane</keyword>
<keyword id="KW-1133">Transmembrane helix</keyword>
<keyword id="KW-0813">Transport</keyword>
<organism>
    <name type="scientific">Escherichia coli O139:H28 (strain E24377A / ETEC)</name>
    <dbReference type="NCBI Taxonomy" id="331111"/>
    <lineage>
        <taxon>Bacteria</taxon>
        <taxon>Pseudomonadati</taxon>
        <taxon>Pseudomonadota</taxon>
        <taxon>Gammaproteobacteria</taxon>
        <taxon>Enterobacterales</taxon>
        <taxon>Enterobacteriaceae</taxon>
        <taxon>Escherichia</taxon>
    </lineage>
</organism>
<dbReference type="EMBL" id="CP000800">
    <property type="protein sequence ID" value="ABV20526.1"/>
    <property type="molecule type" value="Genomic_DNA"/>
</dbReference>
<dbReference type="RefSeq" id="WP_000523005.1">
    <property type="nucleotide sequence ID" value="NC_009801.1"/>
</dbReference>
<dbReference type="GeneID" id="75205691"/>
<dbReference type="KEGG" id="ecw:EcE24377A_2555"/>
<dbReference type="HOGENOM" id="CLU_131462_1_0_6"/>
<dbReference type="UniPathway" id="UPA00030"/>
<dbReference type="Proteomes" id="UP000001122">
    <property type="component" value="Chromosome"/>
</dbReference>
<dbReference type="GO" id="GO:0005886">
    <property type="term" value="C:plasma membrane"/>
    <property type="evidence" value="ECO:0007669"/>
    <property type="project" value="UniProtKB-SubCell"/>
</dbReference>
<dbReference type="GO" id="GO:1901505">
    <property type="term" value="F:carbohydrate derivative transmembrane transporter activity"/>
    <property type="evidence" value="ECO:0007669"/>
    <property type="project" value="InterPro"/>
</dbReference>
<dbReference type="GO" id="GO:0009245">
    <property type="term" value="P:lipid A biosynthetic process"/>
    <property type="evidence" value="ECO:0007669"/>
    <property type="project" value="UniProtKB-UniRule"/>
</dbReference>
<dbReference type="GO" id="GO:0009103">
    <property type="term" value="P:lipopolysaccharide biosynthetic process"/>
    <property type="evidence" value="ECO:0007669"/>
    <property type="project" value="UniProtKB-UniRule"/>
</dbReference>
<dbReference type="FunFam" id="1.10.3730.20:FF:000003">
    <property type="entry name" value="Probable 4-amino-4-deoxy-L-arabinose-phosphoundecaprenol flippase subunit ArnF"/>
    <property type="match status" value="1"/>
</dbReference>
<dbReference type="Gene3D" id="1.10.3730.20">
    <property type="match status" value="1"/>
</dbReference>
<dbReference type="HAMAP" id="MF_00538">
    <property type="entry name" value="Flippase_ArnF"/>
    <property type="match status" value="1"/>
</dbReference>
<dbReference type="InterPro" id="IPR022832">
    <property type="entry name" value="Flippase_ArnF"/>
</dbReference>
<dbReference type="InterPro" id="IPR000390">
    <property type="entry name" value="Small_drug/metabolite_transptr"/>
</dbReference>
<dbReference type="NCBIfam" id="NF002816">
    <property type="entry name" value="PRK02971.1-2"/>
    <property type="match status" value="1"/>
</dbReference>
<dbReference type="PANTHER" id="PTHR30561:SF9">
    <property type="entry name" value="4-AMINO-4-DEOXY-L-ARABINOSE-PHOSPHOUNDECAPRENOL FLIPPASE SUBUNIT ARNF-RELATED"/>
    <property type="match status" value="1"/>
</dbReference>
<dbReference type="PANTHER" id="PTHR30561">
    <property type="entry name" value="SMR FAMILY PROTON-DEPENDENT DRUG EFFLUX TRANSPORTER SUGE"/>
    <property type="match status" value="1"/>
</dbReference>
<dbReference type="SUPFAM" id="SSF103481">
    <property type="entry name" value="Multidrug resistance efflux transporter EmrE"/>
    <property type="match status" value="1"/>
</dbReference>
<feature type="chain" id="PRO_1000061038" description="Probable 4-amino-4-deoxy-L-arabinose-phosphoundecaprenol flippase subunit ArnF">
    <location>
        <begin position="1"/>
        <end position="128"/>
    </location>
</feature>
<feature type="topological domain" description="Cytoplasmic" evidence="1">
    <location>
        <begin position="1"/>
        <end position="2"/>
    </location>
</feature>
<feature type="transmembrane region" description="Helical" evidence="1">
    <location>
        <begin position="3"/>
        <end position="23"/>
    </location>
</feature>
<feature type="topological domain" description="Periplasmic" evidence="1">
    <location>
        <begin position="24"/>
        <end position="35"/>
    </location>
</feature>
<feature type="transmembrane region" description="Helical" evidence="1">
    <location>
        <begin position="36"/>
        <end position="56"/>
    </location>
</feature>
<feature type="topological domain" description="Cytoplasmic" evidence="1">
    <location>
        <begin position="57"/>
        <end position="76"/>
    </location>
</feature>
<feature type="transmembrane region" description="Helical" evidence="1">
    <location>
        <begin position="77"/>
        <end position="97"/>
    </location>
</feature>
<feature type="topological domain" description="Periplasmic" evidence="1">
    <location>
        <begin position="98"/>
        <end position="100"/>
    </location>
</feature>
<feature type="transmembrane region" description="Helical" evidence="1">
    <location>
        <begin position="101"/>
        <end position="121"/>
    </location>
</feature>
<feature type="topological domain" description="Cytoplasmic" evidence="1">
    <location>
        <begin position="122"/>
        <end position="128"/>
    </location>
</feature>
<reference key="1">
    <citation type="journal article" date="2008" name="J. Bacteriol.">
        <title>The pangenome structure of Escherichia coli: comparative genomic analysis of E. coli commensal and pathogenic isolates.</title>
        <authorList>
            <person name="Rasko D.A."/>
            <person name="Rosovitz M.J."/>
            <person name="Myers G.S.A."/>
            <person name="Mongodin E.F."/>
            <person name="Fricke W.F."/>
            <person name="Gajer P."/>
            <person name="Crabtree J."/>
            <person name="Sebaihia M."/>
            <person name="Thomson N.R."/>
            <person name="Chaudhuri R."/>
            <person name="Henderson I.R."/>
            <person name="Sperandio V."/>
            <person name="Ravel J."/>
        </authorList>
    </citation>
    <scope>NUCLEOTIDE SEQUENCE [LARGE SCALE GENOMIC DNA]</scope>
    <source>
        <strain>E24377A / ETEC</strain>
    </source>
</reference>
<evidence type="ECO:0000255" key="1">
    <source>
        <dbReference type="HAMAP-Rule" id="MF_00538"/>
    </source>
</evidence>